<accession>Q9L641</accession>
<reference key="1">
    <citation type="journal article" date="2000" name="Microbiology">
        <title>Prochlorococcus marinus strain PCC 9511, a picoplanktonic cyanobacterium, synthesizes the smallest urease.</title>
        <authorList>
            <person name="Palinska K.A."/>
            <person name="Jahns T."/>
            <person name="Rippka R."/>
            <person name="Tandeau de Marsac N."/>
        </authorList>
    </citation>
    <scope>NUCLEOTIDE SEQUENCE [GENOMIC DNA]</scope>
</reference>
<comment type="function">
    <text evidence="1">Required for maturation of urease via the functional incorporation of the urease nickel metallocenter.</text>
</comment>
<comment type="subunit">
    <text evidence="1">UreD, UreF and UreG form a complex that acts as a GTP-hydrolysis-dependent molecular chaperone, activating the urease apoprotein by helping to assemble the nickel containing metallocenter of UreC. The UreE protein probably delivers the nickel.</text>
</comment>
<comment type="subcellular location">
    <subcellularLocation>
        <location evidence="1">Cytoplasm</location>
    </subcellularLocation>
</comment>
<comment type="similarity">
    <text evidence="1">Belongs to the UreD family.</text>
</comment>
<gene>
    <name evidence="1" type="primary">ureD</name>
</gene>
<name>URED_PROS9</name>
<dbReference type="EMBL" id="AF242489">
    <property type="protein sequence ID" value="AAF70251.1"/>
    <property type="molecule type" value="Genomic_DNA"/>
</dbReference>
<dbReference type="SMR" id="Q9L641"/>
<dbReference type="GO" id="GO:0005737">
    <property type="term" value="C:cytoplasm"/>
    <property type="evidence" value="ECO:0007669"/>
    <property type="project" value="UniProtKB-SubCell"/>
</dbReference>
<dbReference type="GO" id="GO:0016151">
    <property type="term" value="F:nickel cation binding"/>
    <property type="evidence" value="ECO:0007669"/>
    <property type="project" value="UniProtKB-UniRule"/>
</dbReference>
<dbReference type="HAMAP" id="MF_01384">
    <property type="entry name" value="UreD"/>
    <property type="match status" value="1"/>
</dbReference>
<dbReference type="InterPro" id="IPR002669">
    <property type="entry name" value="UreD"/>
</dbReference>
<dbReference type="PANTHER" id="PTHR33643">
    <property type="entry name" value="UREASE ACCESSORY PROTEIN D"/>
    <property type="match status" value="1"/>
</dbReference>
<dbReference type="PANTHER" id="PTHR33643:SF1">
    <property type="entry name" value="UREASE ACCESSORY PROTEIN D"/>
    <property type="match status" value="1"/>
</dbReference>
<dbReference type="Pfam" id="PF01774">
    <property type="entry name" value="UreD"/>
    <property type="match status" value="1"/>
</dbReference>
<proteinExistence type="inferred from homology"/>
<feature type="chain" id="PRO_0000340481" description="Urease accessory protein UreD">
    <location>
        <begin position="1"/>
        <end position="297"/>
    </location>
</feature>
<protein>
    <recommendedName>
        <fullName evidence="1">Urease accessory protein UreD</fullName>
    </recommendedName>
</protein>
<keyword id="KW-0143">Chaperone</keyword>
<keyword id="KW-0963">Cytoplasm</keyword>
<keyword id="KW-0996">Nickel insertion</keyword>
<organism>
    <name type="scientific">Prochlorococcus marinus subsp. pastoris (strain PCC 9511)</name>
    <dbReference type="NCBI Taxonomy" id="100363"/>
    <lineage>
        <taxon>Bacteria</taxon>
        <taxon>Bacillati</taxon>
        <taxon>Cyanobacteriota</taxon>
        <taxon>Cyanophyceae</taxon>
        <taxon>Synechococcales</taxon>
        <taxon>Prochlorococcaceae</taxon>
        <taxon>Prochlorococcus</taxon>
    </lineage>
</organism>
<sequence length="297" mass="33494">MAKSSWEGNCFLNFFNNKSSSGKDDKTIFKSKFTSPYKLLKCSYDQEGRCILPILHTAGGLVGGDLLEFEANIGINSKVLLTTSSAQKVYGSVGRSKINPEGTFSSQKTKISILDNSHLEYLPQETIVFANGLYSQEFNIKISDNSSFLFTDLIRLGRSSAGESIESGVFRSKLEIMRNGNLCDDWEFVDQIELTKFSFEAKSGMDFKPVFGSLIWICEKEFPITKISYLKEKIKIIFKENNNYLSLGTLENGLSIRFLGTSSQDARKCFFSIWTQIRTVCGFCKPEYQGVWPLQDL</sequence>
<evidence type="ECO:0000255" key="1">
    <source>
        <dbReference type="HAMAP-Rule" id="MF_01384"/>
    </source>
</evidence>